<name>GUAA_FRATH</name>
<organism>
    <name type="scientific">Francisella tularensis subsp. holarctica (strain LVS)</name>
    <dbReference type="NCBI Taxonomy" id="376619"/>
    <lineage>
        <taxon>Bacteria</taxon>
        <taxon>Pseudomonadati</taxon>
        <taxon>Pseudomonadota</taxon>
        <taxon>Gammaproteobacteria</taxon>
        <taxon>Thiotrichales</taxon>
        <taxon>Francisellaceae</taxon>
        <taxon>Francisella</taxon>
    </lineage>
</organism>
<sequence>MTDIHNHKILILDFGSQYTQLIARRVREVGVFCEIFPHDVAADFIKNYQAKGIILSGGPESVYDSDVKAPEIVFELGVPVLGICYGMQTMVMQHGGEVKGADQSEFGKAIINILNLTNNIFSNMEHEQLVWMSHSDKVTQTGEHFEIIASSTNAPVAAVAHKNKPFFGVQFHPETTHTENGKQIIENFVVNICGCDTLWNIENIIENDIKEIKQKVGTDKVILGLSGGVDSSVVAAILHQAIGDQLTCIFVDTGLLRLNEGDQVMQVFAEHMDINVIRINAKNRFLDALRGICDPEQKRKIIGKLFVDIFDEEAAKIENAKWLAQGTIYSDVIESASNNQSKAHVIKSHHNVGGLPKEMKLKLLEPLRELFKDEVRKLGLGLGLPYNMLYRHPFPGPGLGVRILGEIKKEYVETLQKADAIFTEELYKHNLYHDVSQAFGVFLPIKSVGVVGDQRRYEYVIALRAVVSIDFMTATWANLPYDFLSLVSNRIVNEVKQVSRVVYDVTGKPPGTIEWE</sequence>
<accession>Q2A3D4</accession>
<keyword id="KW-0067">ATP-binding</keyword>
<keyword id="KW-0315">Glutamine amidotransferase</keyword>
<keyword id="KW-0332">GMP biosynthesis</keyword>
<keyword id="KW-0436">Ligase</keyword>
<keyword id="KW-0547">Nucleotide-binding</keyword>
<keyword id="KW-0658">Purine biosynthesis</keyword>
<keyword id="KW-1185">Reference proteome</keyword>
<feature type="chain" id="PRO_1000120303" description="GMP synthase [glutamine-hydrolyzing]">
    <location>
        <begin position="1"/>
        <end position="516"/>
    </location>
</feature>
<feature type="domain" description="Glutamine amidotransferase type-1" evidence="1">
    <location>
        <begin position="8"/>
        <end position="198"/>
    </location>
</feature>
<feature type="domain" description="GMPS ATP-PPase" evidence="1">
    <location>
        <begin position="199"/>
        <end position="391"/>
    </location>
</feature>
<feature type="active site" description="Nucleophile" evidence="1">
    <location>
        <position position="84"/>
    </location>
</feature>
<feature type="active site" evidence="1">
    <location>
        <position position="172"/>
    </location>
</feature>
<feature type="active site" evidence="1">
    <location>
        <position position="174"/>
    </location>
</feature>
<feature type="binding site" evidence="1">
    <location>
        <begin position="226"/>
        <end position="232"/>
    </location>
    <ligand>
        <name>ATP</name>
        <dbReference type="ChEBI" id="CHEBI:30616"/>
    </ligand>
</feature>
<evidence type="ECO:0000255" key="1">
    <source>
        <dbReference type="HAMAP-Rule" id="MF_00344"/>
    </source>
</evidence>
<dbReference type="EC" id="6.3.5.2" evidence="1"/>
<dbReference type="EMBL" id="AM233362">
    <property type="protein sequence ID" value="CAJ79510.1"/>
    <property type="molecule type" value="Genomic_DNA"/>
</dbReference>
<dbReference type="RefSeq" id="WP_003015999.1">
    <property type="nucleotide sequence ID" value="NZ_CP009694.1"/>
</dbReference>
<dbReference type="SMR" id="Q2A3D4"/>
<dbReference type="MEROPS" id="C26.957"/>
<dbReference type="KEGG" id="ftl:FTL_1071"/>
<dbReference type="UniPathway" id="UPA00189">
    <property type="reaction ID" value="UER00296"/>
</dbReference>
<dbReference type="Proteomes" id="UP000001944">
    <property type="component" value="Chromosome"/>
</dbReference>
<dbReference type="GO" id="GO:0005829">
    <property type="term" value="C:cytosol"/>
    <property type="evidence" value="ECO:0007669"/>
    <property type="project" value="TreeGrafter"/>
</dbReference>
<dbReference type="GO" id="GO:0005524">
    <property type="term" value="F:ATP binding"/>
    <property type="evidence" value="ECO:0007669"/>
    <property type="project" value="UniProtKB-UniRule"/>
</dbReference>
<dbReference type="GO" id="GO:0003921">
    <property type="term" value="F:GMP synthase activity"/>
    <property type="evidence" value="ECO:0007669"/>
    <property type="project" value="InterPro"/>
</dbReference>
<dbReference type="CDD" id="cd01742">
    <property type="entry name" value="GATase1_GMP_Synthase"/>
    <property type="match status" value="1"/>
</dbReference>
<dbReference type="CDD" id="cd01997">
    <property type="entry name" value="GMP_synthase_C"/>
    <property type="match status" value="1"/>
</dbReference>
<dbReference type="FunFam" id="3.30.300.10:FF:000002">
    <property type="entry name" value="GMP synthase [glutamine-hydrolyzing]"/>
    <property type="match status" value="1"/>
</dbReference>
<dbReference type="FunFam" id="3.40.50.620:FF:000001">
    <property type="entry name" value="GMP synthase [glutamine-hydrolyzing]"/>
    <property type="match status" value="1"/>
</dbReference>
<dbReference type="FunFam" id="3.40.50.880:FF:000001">
    <property type="entry name" value="GMP synthase [glutamine-hydrolyzing]"/>
    <property type="match status" value="1"/>
</dbReference>
<dbReference type="Gene3D" id="3.30.300.10">
    <property type="match status" value="1"/>
</dbReference>
<dbReference type="Gene3D" id="3.40.50.880">
    <property type="match status" value="1"/>
</dbReference>
<dbReference type="Gene3D" id="3.40.50.620">
    <property type="entry name" value="HUPs"/>
    <property type="match status" value="1"/>
</dbReference>
<dbReference type="HAMAP" id="MF_00344">
    <property type="entry name" value="GMP_synthase"/>
    <property type="match status" value="1"/>
</dbReference>
<dbReference type="InterPro" id="IPR029062">
    <property type="entry name" value="Class_I_gatase-like"/>
</dbReference>
<dbReference type="InterPro" id="IPR017926">
    <property type="entry name" value="GATASE"/>
</dbReference>
<dbReference type="InterPro" id="IPR001674">
    <property type="entry name" value="GMP_synth_C"/>
</dbReference>
<dbReference type="InterPro" id="IPR004739">
    <property type="entry name" value="GMP_synth_GATase"/>
</dbReference>
<dbReference type="InterPro" id="IPR022955">
    <property type="entry name" value="GMP_synthase"/>
</dbReference>
<dbReference type="InterPro" id="IPR025777">
    <property type="entry name" value="GMPS_ATP_PPase_dom"/>
</dbReference>
<dbReference type="InterPro" id="IPR022310">
    <property type="entry name" value="NAD/GMP_synthase"/>
</dbReference>
<dbReference type="InterPro" id="IPR014729">
    <property type="entry name" value="Rossmann-like_a/b/a_fold"/>
</dbReference>
<dbReference type="NCBIfam" id="TIGR00884">
    <property type="entry name" value="guaA_Cterm"/>
    <property type="match status" value="1"/>
</dbReference>
<dbReference type="NCBIfam" id="TIGR00888">
    <property type="entry name" value="guaA_Nterm"/>
    <property type="match status" value="1"/>
</dbReference>
<dbReference type="NCBIfam" id="NF000848">
    <property type="entry name" value="PRK00074.1"/>
    <property type="match status" value="1"/>
</dbReference>
<dbReference type="PANTHER" id="PTHR11922:SF2">
    <property type="entry name" value="GMP SYNTHASE [GLUTAMINE-HYDROLYZING]"/>
    <property type="match status" value="1"/>
</dbReference>
<dbReference type="PANTHER" id="PTHR11922">
    <property type="entry name" value="GMP SYNTHASE-RELATED"/>
    <property type="match status" value="1"/>
</dbReference>
<dbReference type="Pfam" id="PF00117">
    <property type="entry name" value="GATase"/>
    <property type="match status" value="1"/>
</dbReference>
<dbReference type="Pfam" id="PF00958">
    <property type="entry name" value="GMP_synt_C"/>
    <property type="match status" value="1"/>
</dbReference>
<dbReference type="Pfam" id="PF02540">
    <property type="entry name" value="NAD_synthase"/>
    <property type="match status" value="1"/>
</dbReference>
<dbReference type="PRINTS" id="PR00097">
    <property type="entry name" value="ANTSNTHASEII"/>
</dbReference>
<dbReference type="PRINTS" id="PR00096">
    <property type="entry name" value="GATASE"/>
</dbReference>
<dbReference type="SUPFAM" id="SSF52402">
    <property type="entry name" value="Adenine nucleotide alpha hydrolases-like"/>
    <property type="match status" value="1"/>
</dbReference>
<dbReference type="SUPFAM" id="SSF52317">
    <property type="entry name" value="Class I glutamine amidotransferase-like"/>
    <property type="match status" value="1"/>
</dbReference>
<dbReference type="SUPFAM" id="SSF54810">
    <property type="entry name" value="GMP synthetase C-terminal dimerisation domain"/>
    <property type="match status" value="1"/>
</dbReference>
<dbReference type="PROSITE" id="PS51273">
    <property type="entry name" value="GATASE_TYPE_1"/>
    <property type="match status" value="1"/>
</dbReference>
<dbReference type="PROSITE" id="PS51553">
    <property type="entry name" value="GMPS_ATP_PPASE"/>
    <property type="match status" value="1"/>
</dbReference>
<proteinExistence type="inferred from homology"/>
<gene>
    <name evidence="1" type="primary">guaA</name>
    <name type="ordered locus">FTL_1071</name>
</gene>
<protein>
    <recommendedName>
        <fullName evidence="1">GMP synthase [glutamine-hydrolyzing]</fullName>
        <ecNumber evidence="1">6.3.5.2</ecNumber>
    </recommendedName>
    <alternativeName>
        <fullName evidence="1">GMP synthetase</fullName>
    </alternativeName>
    <alternativeName>
        <fullName evidence="1">Glutamine amidotransferase</fullName>
    </alternativeName>
</protein>
<reference key="1">
    <citation type="submission" date="2006-03" db="EMBL/GenBank/DDBJ databases">
        <title>Complete genome sequence of Francisella tularensis LVS (Live Vaccine Strain).</title>
        <authorList>
            <person name="Chain P."/>
            <person name="Larimer F."/>
            <person name="Land M."/>
            <person name="Stilwagen S."/>
            <person name="Larsson P."/>
            <person name="Bearden S."/>
            <person name="Chu M."/>
            <person name="Oyston P."/>
            <person name="Forsman M."/>
            <person name="Andersson S."/>
            <person name="Lindler L."/>
            <person name="Titball R."/>
            <person name="Garcia E."/>
        </authorList>
    </citation>
    <scope>NUCLEOTIDE SEQUENCE [LARGE SCALE GENOMIC DNA]</scope>
    <source>
        <strain>LVS</strain>
    </source>
</reference>
<comment type="function">
    <text evidence="1">Catalyzes the synthesis of GMP from XMP.</text>
</comment>
<comment type="catalytic activity">
    <reaction evidence="1">
        <text>XMP + L-glutamine + ATP + H2O = GMP + L-glutamate + AMP + diphosphate + 2 H(+)</text>
        <dbReference type="Rhea" id="RHEA:11680"/>
        <dbReference type="ChEBI" id="CHEBI:15377"/>
        <dbReference type="ChEBI" id="CHEBI:15378"/>
        <dbReference type="ChEBI" id="CHEBI:29985"/>
        <dbReference type="ChEBI" id="CHEBI:30616"/>
        <dbReference type="ChEBI" id="CHEBI:33019"/>
        <dbReference type="ChEBI" id="CHEBI:57464"/>
        <dbReference type="ChEBI" id="CHEBI:58115"/>
        <dbReference type="ChEBI" id="CHEBI:58359"/>
        <dbReference type="ChEBI" id="CHEBI:456215"/>
        <dbReference type="EC" id="6.3.5.2"/>
    </reaction>
</comment>
<comment type="pathway">
    <text evidence="1">Purine metabolism; GMP biosynthesis; GMP from XMP (L-Gln route): step 1/1.</text>
</comment>
<comment type="subunit">
    <text evidence="1">Homodimer.</text>
</comment>